<keyword id="KW-0963">Cytoplasm</keyword>
<keyword id="KW-0413">Isomerase</keyword>
<keyword id="KW-0627">Porphyrin biosynthesis</keyword>
<keyword id="KW-0663">Pyridoxal phosphate</keyword>
<keyword id="KW-1185">Reference proteome</keyword>
<evidence type="ECO:0000255" key="1">
    <source>
        <dbReference type="HAMAP-Rule" id="MF_00375"/>
    </source>
</evidence>
<feature type="chain" id="PRO_1000072150" description="Glutamate-1-semialdehyde 2,1-aminomutase">
    <location>
        <begin position="1"/>
        <end position="427"/>
    </location>
</feature>
<feature type="modified residue" description="N6-(pyridoxal phosphate)lysine" evidence="1">
    <location>
        <position position="265"/>
    </location>
</feature>
<accession>A6VQ66</accession>
<proteinExistence type="inferred from homology"/>
<organism>
    <name type="scientific">Actinobacillus succinogenes (strain ATCC 55618 / DSM 22257 / CCUG 43843 / 130Z)</name>
    <dbReference type="NCBI Taxonomy" id="339671"/>
    <lineage>
        <taxon>Bacteria</taxon>
        <taxon>Pseudomonadati</taxon>
        <taxon>Pseudomonadota</taxon>
        <taxon>Gammaproteobacteria</taxon>
        <taxon>Pasteurellales</taxon>
        <taxon>Pasteurellaceae</taxon>
        <taxon>Actinobacillus</taxon>
    </lineage>
</organism>
<reference key="1">
    <citation type="journal article" date="2010" name="BMC Genomics">
        <title>A genomic perspective on the potential of Actinobacillus succinogenes for industrial succinate production.</title>
        <authorList>
            <person name="McKinlay J.B."/>
            <person name="Laivenieks M."/>
            <person name="Schindler B.D."/>
            <person name="McKinlay A.A."/>
            <person name="Siddaramappa S."/>
            <person name="Challacombe J.F."/>
            <person name="Lowry S.R."/>
            <person name="Clum A."/>
            <person name="Lapidus A.L."/>
            <person name="Burkhart K.B."/>
            <person name="Harkins V."/>
            <person name="Vieille C."/>
        </authorList>
    </citation>
    <scope>NUCLEOTIDE SEQUENCE [LARGE SCALE GENOMIC DNA]</scope>
    <source>
        <strain>ATCC 55618 / DSM 22257 / CCUG 43843 / 130Z</strain>
    </source>
</reference>
<comment type="catalytic activity">
    <reaction evidence="1">
        <text>(S)-4-amino-5-oxopentanoate = 5-aminolevulinate</text>
        <dbReference type="Rhea" id="RHEA:14265"/>
        <dbReference type="ChEBI" id="CHEBI:57501"/>
        <dbReference type="ChEBI" id="CHEBI:356416"/>
        <dbReference type="EC" id="5.4.3.8"/>
    </reaction>
</comment>
<comment type="cofactor">
    <cofactor evidence="1">
        <name>pyridoxal 5'-phosphate</name>
        <dbReference type="ChEBI" id="CHEBI:597326"/>
    </cofactor>
</comment>
<comment type="pathway">
    <text evidence="1">Porphyrin-containing compound metabolism; protoporphyrin-IX biosynthesis; 5-aminolevulinate from L-glutamyl-tRNA(Glu): step 2/2.</text>
</comment>
<comment type="subunit">
    <text evidence="1">Homodimer.</text>
</comment>
<comment type="subcellular location">
    <subcellularLocation>
        <location evidence="1">Cytoplasm</location>
    </subcellularLocation>
</comment>
<comment type="similarity">
    <text evidence="1">Belongs to the class-III pyridoxal-phosphate-dependent aminotransferase family. HemL subfamily.</text>
</comment>
<gene>
    <name evidence="1" type="primary">hemL</name>
    <name type="ordered locus">Asuc_1761</name>
</gene>
<protein>
    <recommendedName>
        <fullName evidence="1">Glutamate-1-semialdehyde 2,1-aminomutase</fullName>
        <shortName evidence="1">GSA</shortName>
        <ecNumber evidence="1">5.4.3.8</ecNumber>
    </recommendedName>
    <alternativeName>
        <fullName evidence="1">Glutamate-1-semialdehyde aminotransferase</fullName>
        <shortName evidence="1">GSA-AT</shortName>
    </alternativeName>
</protein>
<dbReference type="EC" id="5.4.3.8" evidence="1"/>
<dbReference type="EMBL" id="CP000746">
    <property type="protein sequence ID" value="ABR75113.1"/>
    <property type="molecule type" value="Genomic_DNA"/>
</dbReference>
<dbReference type="RefSeq" id="WP_012073490.1">
    <property type="nucleotide sequence ID" value="NC_009655.1"/>
</dbReference>
<dbReference type="SMR" id="A6VQ66"/>
<dbReference type="STRING" id="339671.Asuc_1761"/>
<dbReference type="KEGG" id="asu:Asuc_1761"/>
<dbReference type="eggNOG" id="COG0001">
    <property type="taxonomic scope" value="Bacteria"/>
</dbReference>
<dbReference type="HOGENOM" id="CLU_016922_1_5_6"/>
<dbReference type="OrthoDB" id="9801052at2"/>
<dbReference type="UniPathway" id="UPA00251">
    <property type="reaction ID" value="UER00317"/>
</dbReference>
<dbReference type="Proteomes" id="UP000001114">
    <property type="component" value="Chromosome"/>
</dbReference>
<dbReference type="GO" id="GO:0005737">
    <property type="term" value="C:cytoplasm"/>
    <property type="evidence" value="ECO:0007669"/>
    <property type="project" value="UniProtKB-SubCell"/>
</dbReference>
<dbReference type="GO" id="GO:0042286">
    <property type="term" value="F:glutamate-1-semialdehyde 2,1-aminomutase activity"/>
    <property type="evidence" value="ECO:0007669"/>
    <property type="project" value="UniProtKB-UniRule"/>
</dbReference>
<dbReference type="GO" id="GO:0030170">
    <property type="term" value="F:pyridoxal phosphate binding"/>
    <property type="evidence" value="ECO:0007669"/>
    <property type="project" value="InterPro"/>
</dbReference>
<dbReference type="GO" id="GO:0008483">
    <property type="term" value="F:transaminase activity"/>
    <property type="evidence" value="ECO:0007669"/>
    <property type="project" value="InterPro"/>
</dbReference>
<dbReference type="GO" id="GO:0006782">
    <property type="term" value="P:protoporphyrinogen IX biosynthetic process"/>
    <property type="evidence" value="ECO:0007669"/>
    <property type="project" value="UniProtKB-UniRule"/>
</dbReference>
<dbReference type="CDD" id="cd00610">
    <property type="entry name" value="OAT_like"/>
    <property type="match status" value="1"/>
</dbReference>
<dbReference type="FunFam" id="3.40.640.10:FF:000021">
    <property type="entry name" value="Glutamate-1-semialdehyde 2,1-aminomutase"/>
    <property type="match status" value="1"/>
</dbReference>
<dbReference type="FunFam" id="3.90.1150.10:FF:000012">
    <property type="entry name" value="Glutamate-1-semialdehyde 2,1-aminomutase"/>
    <property type="match status" value="1"/>
</dbReference>
<dbReference type="Gene3D" id="3.90.1150.10">
    <property type="entry name" value="Aspartate Aminotransferase, domain 1"/>
    <property type="match status" value="1"/>
</dbReference>
<dbReference type="Gene3D" id="3.40.640.10">
    <property type="entry name" value="Type I PLP-dependent aspartate aminotransferase-like (Major domain)"/>
    <property type="match status" value="1"/>
</dbReference>
<dbReference type="HAMAP" id="MF_00375">
    <property type="entry name" value="HemL_aminotrans_3"/>
    <property type="match status" value="1"/>
</dbReference>
<dbReference type="InterPro" id="IPR004639">
    <property type="entry name" value="4pyrrol_synth_GluAld_NH2Trfase"/>
</dbReference>
<dbReference type="InterPro" id="IPR005814">
    <property type="entry name" value="Aminotrans_3"/>
</dbReference>
<dbReference type="InterPro" id="IPR049704">
    <property type="entry name" value="Aminotrans_3_PPA_site"/>
</dbReference>
<dbReference type="InterPro" id="IPR015424">
    <property type="entry name" value="PyrdxlP-dep_Trfase"/>
</dbReference>
<dbReference type="InterPro" id="IPR015421">
    <property type="entry name" value="PyrdxlP-dep_Trfase_major"/>
</dbReference>
<dbReference type="InterPro" id="IPR015422">
    <property type="entry name" value="PyrdxlP-dep_Trfase_small"/>
</dbReference>
<dbReference type="NCBIfam" id="TIGR00713">
    <property type="entry name" value="hemL"/>
    <property type="match status" value="1"/>
</dbReference>
<dbReference type="NCBIfam" id="NF000818">
    <property type="entry name" value="PRK00062.1"/>
    <property type="match status" value="1"/>
</dbReference>
<dbReference type="PANTHER" id="PTHR43713">
    <property type="entry name" value="GLUTAMATE-1-SEMIALDEHYDE 2,1-AMINOMUTASE"/>
    <property type="match status" value="1"/>
</dbReference>
<dbReference type="PANTHER" id="PTHR43713:SF3">
    <property type="entry name" value="GLUTAMATE-1-SEMIALDEHYDE 2,1-AMINOMUTASE 1, CHLOROPLASTIC-RELATED"/>
    <property type="match status" value="1"/>
</dbReference>
<dbReference type="Pfam" id="PF00202">
    <property type="entry name" value="Aminotran_3"/>
    <property type="match status" value="1"/>
</dbReference>
<dbReference type="SUPFAM" id="SSF53383">
    <property type="entry name" value="PLP-dependent transferases"/>
    <property type="match status" value="1"/>
</dbReference>
<dbReference type="PROSITE" id="PS00600">
    <property type="entry name" value="AA_TRANSFER_CLASS_3"/>
    <property type="match status" value="1"/>
</dbReference>
<sequence length="427" mass="45369">MSNSTALFQRARQVIPGGVNSPVRAFKGVGGTPVFIQKAAGAYITDTDGKQYIDYVGSWGPMVLGHNHPAIIDAVLKAVPNGLSFGAPTEGEITLAELVCRLIPSIELVRMVSSGTEATMSAIRLARGYTKRDKIIKFEGCYHGHSDSLLVKAGSGALTLGQPSSPGVPEDFAKHTLTCTYNDLNSVKCAFERYPQDIACLIIEPVAGNMNCVPPKPGFLQGVRELCDQYGALLIIDEVMTGFRVALGGAQAYYGVTPDLTALGKIIGGGMPVGAFGGKREIMEYIAPTGPVYQAGTLSGNPIAMAAGLACLTELSKPGNEQQLAEKTQQLAEGLKTLAKKHGVPFIAQYVGGMFGLFFTDVPEVTNFQDVMKCDVAKFNRFFHLMLEQGVYLAPSAFEAGFMSLAHSDADIEQTLKAADNAFAVLA</sequence>
<name>GSA_ACTSZ</name>